<accession>Q8WPI3</accession>
<reference key="1">
    <citation type="journal article" date="2008" name="PLoS ONE">
        <title>Isolation, cloning and structural characterisation of boophilin, a multifunctional Kunitz-type proteinase inhibitor from the cattle tick.</title>
        <authorList>
            <person name="Macedo-Ribeiro S."/>
            <person name="Almeida C."/>
            <person name="Calisto B.M."/>
            <person name="Friedrich T."/>
            <person name="Mentele R."/>
            <person name="Sturzebecher J."/>
            <person name="Fuentes-Prior P."/>
            <person name="Pereira P.J."/>
        </authorList>
    </citation>
    <scope>NUCLEOTIDE SEQUENCE [MRNA]</scope>
    <scope>PARTIAL PROTEIN SEQUENCE</scope>
    <scope>INTERACTION WITH HOST THROMBIN AND TRYPSIN</scope>
    <scope>FUNCTION</scope>
    <scope>PROBABLE PYROGLUTAMATE FORMATION AT GLN-16</scope>
</reference>
<reference key="2">
    <citation type="journal article" date="2016" name="PLoS Negl. Trop. Dis.">
        <title>In vitro mode of action and anti-thrombotic activity of boophilin, a multifunctional kunitz protease inhibitor from the midgut of a tick vector of babesiosis, Rhipicephalus microplus.</title>
        <authorList>
            <person name="Assumpcao T.C."/>
            <person name="Ma D."/>
            <person name="Mizurini D.M."/>
            <person name="Kini R.M."/>
            <person name="Ribeiro J.M."/>
            <person name="Kotsyfakis M."/>
            <person name="Monteiro R.Q."/>
            <person name="Francischetti I.M."/>
        </authorList>
    </citation>
    <scope>FUNCTION</scope>
    <scope>RECOMBINANT EXPRESSION</scope>
</reference>
<evidence type="ECO:0000250" key="1">
    <source>
        <dbReference type="UniProtKB" id="Q8WPI2"/>
    </source>
</evidence>
<evidence type="ECO:0000255" key="2"/>
<evidence type="ECO:0000255" key="3">
    <source>
        <dbReference type="PROSITE-ProRule" id="PRU00031"/>
    </source>
</evidence>
<evidence type="ECO:0000269" key="4">
    <source>
    </source>
</evidence>
<evidence type="ECO:0000269" key="5">
    <source>
    </source>
</evidence>
<evidence type="ECO:0000303" key="6">
    <source>
    </source>
</evidence>
<evidence type="ECO:0000305" key="7">
    <source>
    </source>
</evidence>
<evidence type="ECO:0000305" key="8">
    <source>
    </source>
</evidence>
<protein>
    <recommendedName>
        <fullName evidence="6">Boophilin-G2</fullName>
    </recommendedName>
</protein>
<keyword id="KW-1203">Blood coagulation cascade inhibiting toxin</keyword>
<keyword id="KW-0903">Direct protein sequencing</keyword>
<keyword id="KW-1015">Disulfide bond</keyword>
<keyword id="KW-1199">Hemostasis impairing toxin</keyword>
<keyword id="KW-0646">Protease inhibitor</keyword>
<keyword id="KW-0873">Pyrrolidone carboxylic acid</keyword>
<keyword id="KW-0677">Repeat</keyword>
<keyword id="KW-0964">Secreted</keyword>
<keyword id="KW-0722">Serine protease inhibitor</keyword>
<keyword id="KW-0732">Signal</keyword>
<keyword id="KW-0800">Toxin</keyword>
<dbReference type="EMBL" id="AJ304446">
    <property type="protein sequence ID" value="CAC82582.1"/>
    <property type="molecule type" value="mRNA"/>
</dbReference>
<dbReference type="SMR" id="Q8WPI3"/>
<dbReference type="MEROPS" id="I02.020"/>
<dbReference type="MEROPS" id="I02.021"/>
<dbReference type="VEuPathDB" id="VectorBase:LOC119167388"/>
<dbReference type="OrthoDB" id="4473401at2759"/>
<dbReference type="GO" id="GO:0005615">
    <property type="term" value="C:extracellular space"/>
    <property type="evidence" value="ECO:0007669"/>
    <property type="project" value="TreeGrafter"/>
</dbReference>
<dbReference type="GO" id="GO:0004867">
    <property type="term" value="F:serine-type endopeptidase inhibitor activity"/>
    <property type="evidence" value="ECO:0007669"/>
    <property type="project" value="UniProtKB-KW"/>
</dbReference>
<dbReference type="GO" id="GO:0090729">
    <property type="term" value="F:toxin activity"/>
    <property type="evidence" value="ECO:0007669"/>
    <property type="project" value="UniProtKB-KW"/>
</dbReference>
<dbReference type="GO" id="GO:0044562">
    <property type="term" value="P:envenomation resulting in negative regulation of voltage-gated potassium channel activity in another organism"/>
    <property type="evidence" value="ECO:0007669"/>
    <property type="project" value="UniProtKB-ARBA"/>
</dbReference>
<dbReference type="CDD" id="cd22599">
    <property type="entry name" value="Kunitz_boophilin_1-like"/>
    <property type="match status" value="1"/>
</dbReference>
<dbReference type="CDD" id="cd22600">
    <property type="entry name" value="Kunitz_boophilin_2-like"/>
    <property type="match status" value="1"/>
</dbReference>
<dbReference type="FunFam" id="4.10.410.10:FF:000021">
    <property type="entry name" value="Serine protease inhibitor, putative"/>
    <property type="match status" value="1"/>
</dbReference>
<dbReference type="Gene3D" id="4.10.410.10">
    <property type="entry name" value="Pancreatic trypsin inhibitor Kunitz domain"/>
    <property type="match status" value="2"/>
</dbReference>
<dbReference type="InterPro" id="IPR002223">
    <property type="entry name" value="Kunitz_BPTI"/>
</dbReference>
<dbReference type="InterPro" id="IPR036880">
    <property type="entry name" value="Kunitz_BPTI_sf"/>
</dbReference>
<dbReference type="InterPro" id="IPR020901">
    <property type="entry name" value="Prtase_inh_Kunz-CS"/>
</dbReference>
<dbReference type="InterPro" id="IPR050098">
    <property type="entry name" value="TFPI/VKTCI-like"/>
</dbReference>
<dbReference type="PANTHER" id="PTHR10083:SF374">
    <property type="entry name" value="BPTI_KUNITZ INHIBITOR DOMAIN-CONTAINING PROTEIN"/>
    <property type="match status" value="1"/>
</dbReference>
<dbReference type="PANTHER" id="PTHR10083">
    <property type="entry name" value="KUNITZ-TYPE PROTEASE INHIBITOR-RELATED"/>
    <property type="match status" value="1"/>
</dbReference>
<dbReference type="Pfam" id="PF00014">
    <property type="entry name" value="Kunitz_BPTI"/>
    <property type="match status" value="2"/>
</dbReference>
<dbReference type="PRINTS" id="PR00759">
    <property type="entry name" value="BASICPTASE"/>
</dbReference>
<dbReference type="SMART" id="SM00131">
    <property type="entry name" value="KU"/>
    <property type="match status" value="2"/>
</dbReference>
<dbReference type="SUPFAM" id="SSF57362">
    <property type="entry name" value="BPTI-like"/>
    <property type="match status" value="2"/>
</dbReference>
<dbReference type="PROSITE" id="PS00280">
    <property type="entry name" value="BPTI_KUNITZ_1"/>
    <property type="match status" value="2"/>
</dbReference>
<dbReference type="PROSITE" id="PS50279">
    <property type="entry name" value="BPTI_KUNITZ_2"/>
    <property type="match status" value="2"/>
</dbReference>
<organism>
    <name type="scientific">Rhipicephalus microplus</name>
    <name type="common">Cattle tick</name>
    <name type="synonym">Boophilus microplus</name>
    <dbReference type="NCBI Taxonomy" id="6941"/>
    <lineage>
        <taxon>Eukaryota</taxon>
        <taxon>Metazoa</taxon>
        <taxon>Ecdysozoa</taxon>
        <taxon>Arthropoda</taxon>
        <taxon>Chelicerata</taxon>
        <taxon>Arachnida</taxon>
        <taxon>Acari</taxon>
        <taxon>Parasitiformes</taxon>
        <taxon>Ixodida</taxon>
        <taxon>Ixodoidea</taxon>
        <taxon>Ixodidae</taxon>
        <taxon>Rhipicephalinae</taxon>
        <taxon>Rhipicephalus</taxon>
        <taxon>Boophilus</taxon>
    </lineage>
</organism>
<feature type="signal peptide" evidence="2">
    <location>
        <begin position="1"/>
        <end position="15"/>
    </location>
</feature>
<feature type="chain" id="PRO_5000066992" description="Boophilin-G2">
    <location>
        <begin position="16"/>
        <end position="142"/>
    </location>
</feature>
<feature type="domain" description="BPTI/Kunitz inhibitor 1" evidence="3">
    <location>
        <begin position="21"/>
        <end position="71"/>
    </location>
</feature>
<feature type="domain" description="BPTI/Kunitz inhibitor 2" evidence="3">
    <location>
        <begin position="89"/>
        <end position="139"/>
    </location>
</feature>
<feature type="modified residue" description="Pyrrolidone carboxylic acid" evidence="7">
    <location>
        <position position="16"/>
    </location>
</feature>
<feature type="disulfide bond" evidence="1">
    <location>
        <begin position="21"/>
        <end position="71"/>
    </location>
</feature>
<feature type="disulfide bond" evidence="1">
    <location>
        <begin position="30"/>
        <end position="54"/>
    </location>
</feature>
<feature type="disulfide bond" evidence="1">
    <location>
        <begin position="46"/>
        <end position="67"/>
    </location>
</feature>
<feature type="disulfide bond" evidence="1">
    <location>
        <begin position="89"/>
        <end position="139"/>
    </location>
</feature>
<feature type="disulfide bond" evidence="1">
    <location>
        <begin position="98"/>
        <end position="122"/>
    </location>
</feature>
<feature type="disulfide bond" evidence="1">
    <location>
        <begin position="114"/>
        <end position="135"/>
    </location>
</feature>
<proteinExistence type="evidence at protein level"/>
<comment type="function">
    <text evidence="4 5">Midgut thrombin inhibitor that plays a major role in keeping the midgut microenvironment at low hemostatic and inflammatory tonus (PubMed:18286181, PubMed:26745503). Also inhibits FXIa (F11), kallikrein (KLK1), neutrophil elastase (ELANE) and cathepsin G (CTSG), which play a role in the contact pathway of the coagulation cascade (PubMed:18286181, PubMed:26745503). Also abrogates platelet aggregation by cathepsin G and plasmin, and attenuates tissue factor (F3) pathway inhibitor cleavage by elastase (PubMed:18286181, PubMed:26745503). In vivo, inhibits thrombosis and promotes bleeding in mice (PubMed:26745503).</text>
</comment>
<comment type="subunit">
    <text evidence="4">Interacts with host thrombin and trypsin.</text>
</comment>
<comment type="subcellular location">
    <subcellularLocation>
        <location evidence="7">Secreted</location>
    </subcellularLocation>
</comment>
<comment type="tissue specificity">
    <text evidence="8">Expressed in the midgut.</text>
</comment>
<comment type="PTM">
    <text evidence="4">The N-terminus is blocked.</text>
</comment>
<sequence length="142" mass="15555">MKYLILLAVLGTAFAQRNGFCRLPADEGICKALIPRFYFNTETGKCTMFSYGGCGGNENNFETIEDCQKACGAPERVSDFEGADFKTGCEPAADSGSCAGQLERWFYNVRSGECETFVYGGCGGNDNNYESEEECELVCKNM</sequence>
<name>KUNIG_RHIMP</name>